<evidence type="ECO:0000255" key="1">
    <source>
        <dbReference type="HAMAP-Rule" id="MF_02117"/>
    </source>
</evidence>
<evidence type="ECO:0000305" key="2"/>
<reference key="1">
    <citation type="journal article" date="2009" name="BMC Genomics">
        <title>Complete genome sequence of the sugarcane nitrogen-fixing endophyte Gluconacetobacter diazotrophicus Pal5.</title>
        <authorList>
            <person name="Bertalan M."/>
            <person name="Albano R."/>
            <person name="de Padua V."/>
            <person name="Rouws L."/>
            <person name="Rojas C."/>
            <person name="Hemerly A."/>
            <person name="Teixeira K."/>
            <person name="Schwab S."/>
            <person name="Araujo J."/>
            <person name="Oliveira A."/>
            <person name="Franca L."/>
            <person name="Magalhaes V."/>
            <person name="Alqueres S."/>
            <person name="Cardoso A."/>
            <person name="Almeida W."/>
            <person name="Loureiro M.M."/>
            <person name="Nogueira E."/>
            <person name="Cidade D."/>
            <person name="Oliveira D."/>
            <person name="Simao T."/>
            <person name="Macedo J."/>
            <person name="Valadao A."/>
            <person name="Dreschsel M."/>
            <person name="Freitas F."/>
            <person name="Vidal M."/>
            <person name="Guedes H."/>
            <person name="Rodrigues E."/>
            <person name="Meneses C."/>
            <person name="Brioso P."/>
            <person name="Pozzer L."/>
            <person name="Figueiredo D."/>
            <person name="Montano H."/>
            <person name="Junior J."/>
            <person name="de Souza Filho G."/>
            <person name="Martin Quintana Flores V."/>
            <person name="Ferreira B."/>
            <person name="Branco A."/>
            <person name="Gonzalez P."/>
            <person name="Guillobel H."/>
            <person name="Lemos M."/>
            <person name="Seibel L."/>
            <person name="Macedo J."/>
            <person name="Alves-Ferreira M."/>
            <person name="Sachetto-Martins G."/>
            <person name="Coelho A."/>
            <person name="Santos E."/>
            <person name="Amaral G."/>
            <person name="Neves A."/>
            <person name="Pacheco A.B."/>
            <person name="Carvalho D."/>
            <person name="Lery L."/>
            <person name="Bisch P."/>
            <person name="Rossle S.C."/>
            <person name="Urmenyi T."/>
            <person name="Rael Pereira A."/>
            <person name="Silva R."/>
            <person name="Rondinelli E."/>
            <person name="von Kruger W."/>
            <person name="Martins O."/>
            <person name="Baldani J.I."/>
            <person name="Ferreira P.C."/>
        </authorList>
    </citation>
    <scope>NUCLEOTIDE SEQUENCE [LARGE SCALE GENOMIC DNA]</scope>
    <source>
        <strain>ATCC 49037 / DSM 5601 / CCUG 37298 / CIP 103539 / LMG 7603 / PAl5</strain>
    </source>
</reference>
<reference key="2">
    <citation type="journal article" date="2010" name="Stand. Genomic Sci.">
        <title>Two genome sequences of the same bacterial strain, Gluconacetobacter diazotrophicus PAl 5, suggest a new standard in genome sequence submission.</title>
        <authorList>
            <person name="Giongo A."/>
            <person name="Tyler H.L."/>
            <person name="Zipperer U.N."/>
            <person name="Triplett E.W."/>
        </authorList>
    </citation>
    <scope>NUCLEOTIDE SEQUENCE [LARGE SCALE GENOMIC DNA]</scope>
    <source>
        <strain>ATCC 49037 / DSM 5601 / CCUG 37298 / CIP 103539 / LMG 7603 / PAl5</strain>
    </source>
</reference>
<protein>
    <recommendedName>
        <fullName evidence="1">N(2)-fixation sustaining protein CowN</fullName>
    </recommendedName>
    <alternativeName>
        <fullName evidence="1">CO weal-nitrogenase</fullName>
    </alternativeName>
</protein>
<gene>
    <name evidence="1" type="primary">cowN</name>
    <name type="ordered locus">GDI3488</name>
    <name type="ordered locus">Gdia_2893</name>
</gene>
<comment type="function">
    <text evidence="1">Is required to sustain N(2)-dependent growth in the presence of low levels of carbon monoxide (CO). Probably acts by protecting the N(2) fixation ability of the nitrogenase complex, which is inactivated in the presence of CO.</text>
</comment>
<comment type="similarity">
    <text evidence="1">Belongs to the CowN family.</text>
</comment>
<proteinExistence type="inferred from homology"/>
<name>COWN_GLUDA</name>
<organism>
    <name type="scientific">Gluconacetobacter diazotrophicus (strain ATCC 49037 / DSM 5601 / CCUG 37298 / CIP 103539 / LMG 7603 / PAl5)</name>
    <dbReference type="NCBI Taxonomy" id="272568"/>
    <lineage>
        <taxon>Bacteria</taxon>
        <taxon>Pseudomonadati</taxon>
        <taxon>Pseudomonadota</taxon>
        <taxon>Alphaproteobacteria</taxon>
        <taxon>Acetobacterales</taxon>
        <taxon>Acetobacteraceae</taxon>
        <taxon>Gluconacetobacter</taxon>
    </lineage>
</organism>
<dbReference type="EMBL" id="AM889285">
    <property type="protein sequence ID" value="CAP57431.1"/>
    <property type="molecule type" value="Genomic_DNA"/>
</dbReference>
<dbReference type="EMBL" id="CP001189">
    <property type="protein sequence ID" value="ACI52624.1"/>
    <property type="molecule type" value="Genomic_DNA"/>
</dbReference>
<dbReference type="RefSeq" id="WP_012228122.1">
    <property type="nucleotide sequence ID" value="NC_010125.1"/>
</dbReference>
<dbReference type="RefSeq" id="WP_012554649.1">
    <property type="nucleotide sequence ID" value="NC_011365.1"/>
</dbReference>
<dbReference type="STRING" id="272568.GDI3488"/>
<dbReference type="KEGG" id="gdi:GDI3488"/>
<dbReference type="KEGG" id="gdj:Gdia_2893"/>
<dbReference type="eggNOG" id="ENOG5032TZQ">
    <property type="taxonomic scope" value="Bacteria"/>
</dbReference>
<dbReference type="HOGENOM" id="CLU_149349_0_0_5"/>
<dbReference type="OrthoDB" id="7689335at2"/>
<dbReference type="Proteomes" id="UP000001176">
    <property type="component" value="Chromosome"/>
</dbReference>
<dbReference type="GO" id="GO:0009399">
    <property type="term" value="P:nitrogen fixation"/>
    <property type="evidence" value="ECO:0007669"/>
    <property type="project" value="UniProtKB-UniRule"/>
</dbReference>
<dbReference type="HAMAP" id="MF_02117">
    <property type="entry name" value="CowN"/>
    <property type="match status" value="1"/>
</dbReference>
<dbReference type="InterPro" id="IPR024899">
    <property type="entry name" value="CowN"/>
</dbReference>
<dbReference type="NCBIfam" id="NF033689">
    <property type="entry name" value="N2Fix_CO_CowN"/>
    <property type="match status" value="1"/>
</dbReference>
<dbReference type="Pfam" id="PF20543">
    <property type="entry name" value="CowN"/>
    <property type="match status" value="1"/>
</dbReference>
<keyword id="KW-0535">Nitrogen fixation</keyword>
<keyword id="KW-1185">Reference proteome</keyword>
<sequence>MTEQIDRYVSFRNVEWERRTAEVFALLQPHFDGSTSPFWDYFLRQRVIAHAQGLDDLRVLHNFLPTLKDLLEELDDERTLSRLEELEVLCM</sequence>
<accession>A9H4F6</accession>
<accession>B5ZI91</accession>
<feature type="chain" id="PRO_0000407257" description="N(2)-fixation sustaining protein CowN">
    <location>
        <begin position="1"/>
        <end position="91"/>
    </location>
</feature>
<feature type="sequence conflict" description="In Ref. 2; ACI52624." evidence="2" ref="2">
    <original>E</original>
    <variation>G</variation>
    <location>
        <position position="77"/>
    </location>
</feature>